<name>RS16_HELPY</name>
<protein>
    <recommendedName>
        <fullName evidence="1">Small ribosomal subunit protein bS16</fullName>
    </recommendedName>
    <alternativeName>
        <fullName evidence="2">30S ribosomal protein S16</fullName>
    </alternativeName>
</protein>
<gene>
    <name evidence="1" type="primary">rpsP</name>
    <name type="ordered locus">HP_1151</name>
</gene>
<dbReference type="EMBL" id="AE000511">
    <property type="protein sequence ID" value="AAD08199.1"/>
    <property type="molecule type" value="Genomic_DNA"/>
</dbReference>
<dbReference type="PIR" id="G64663">
    <property type="entry name" value="G64663"/>
</dbReference>
<dbReference type="RefSeq" id="NP_207942.1">
    <property type="nucleotide sequence ID" value="NC_000915.1"/>
</dbReference>
<dbReference type="RefSeq" id="WP_000216125.1">
    <property type="nucleotide sequence ID" value="NC_018939.1"/>
</dbReference>
<dbReference type="SMR" id="P56023"/>
<dbReference type="FunCoup" id="P56023">
    <property type="interactions" value="388"/>
</dbReference>
<dbReference type="IntAct" id="P56023">
    <property type="interactions" value="4"/>
</dbReference>
<dbReference type="STRING" id="85962.HP_1151"/>
<dbReference type="PaxDb" id="85962-C694_05945"/>
<dbReference type="EnsemblBacteria" id="AAD08199">
    <property type="protein sequence ID" value="AAD08199"/>
    <property type="gene ID" value="HP_1151"/>
</dbReference>
<dbReference type="KEGG" id="heo:C694_05945"/>
<dbReference type="KEGG" id="hpy:HP_1151"/>
<dbReference type="PATRIC" id="fig|85962.47.peg.1235"/>
<dbReference type="eggNOG" id="COG0228">
    <property type="taxonomic scope" value="Bacteria"/>
</dbReference>
<dbReference type="InParanoid" id="P56023"/>
<dbReference type="OrthoDB" id="9807878at2"/>
<dbReference type="PhylomeDB" id="P56023"/>
<dbReference type="Proteomes" id="UP000000429">
    <property type="component" value="Chromosome"/>
</dbReference>
<dbReference type="GO" id="GO:0005737">
    <property type="term" value="C:cytoplasm"/>
    <property type="evidence" value="ECO:0007669"/>
    <property type="project" value="UniProtKB-ARBA"/>
</dbReference>
<dbReference type="GO" id="GO:0015935">
    <property type="term" value="C:small ribosomal subunit"/>
    <property type="evidence" value="ECO:0000318"/>
    <property type="project" value="GO_Central"/>
</dbReference>
<dbReference type="GO" id="GO:0003735">
    <property type="term" value="F:structural constituent of ribosome"/>
    <property type="evidence" value="ECO:0000318"/>
    <property type="project" value="GO_Central"/>
</dbReference>
<dbReference type="GO" id="GO:0006412">
    <property type="term" value="P:translation"/>
    <property type="evidence" value="ECO:0007669"/>
    <property type="project" value="UniProtKB-UniRule"/>
</dbReference>
<dbReference type="FunFam" id="3.30.1320.10:FF:000005">
    <property type="entry name" value="30S ribosomal protein S16"/>
    <property type="match status" value="1"/>
</dbReference>
<dbReference type="Gene3D" id="3.30.1320.10">
    <property type="match status" value="1"/>
</dbReference>
<dbReference type="HAMAP" id="MF_00385">
    <property type="entry name" value="Ribosomal_bS16"/>
    <property type="match status" value="1"/>
</dbReference>
<dbReference type="InterPro" id="IPR000307">
    <property type="entry name" value="Ribosomal_bS16"/>
</dbReference>
<dbReference type="InterPro" id="IPR020592">
    <property type="entry name" value="Ribosomal_bS16_CS"/>
</dbReference>
<dbReference type="InterPro" id="IPR023803">
    <property type="entry name" value="Ribosomal_bS16_dom_sf"/>
</dbReference>
<dbReference type="NCBIfam" id="TIGR00002">
    <property type="entry name" value="S16"/>
    <property type="match status" value="1"/>
</dbReference>
<dbReference type="PANTHER" id="PTHR12919">
    <property type="entry name" value="30S RIBOSOMAL PROTEIN S16"/>
    <property type="match status" value="1"/>
</dbReference>
<dbReference type="PANTHER" id="PTHR12919:SF20">
    <property type="entry name" value="SMALL RIBOSOMAL SUBUNIT PROTEIN BS16M"/>
    <property type="match status" value="1"/>
</dbReference>
<dbReference type="Pfam" id="PF00886">
    <property type="entry name" value="Ribosomal_S16"/>
    <property type="match status" value="1"/>
</dbReference>
<dbReference type="SUPFAM" id="SSF54565">
    <property type="entry name" value="Ribosomal protein S16"/>
    <property type="match status" value="1"/>
</dbReference>
<dbReference type="PROSITE" id="PS00732">
    <property type="entry name" value="RIBOSOMAL_S16"/>
    <property type="match status" value="1"/>
</dbReference>
<feature type="chain" id="PRO_0000167194" description="Small ribosomal subunit protein bS16">
    <location>
        <begin position="1"/>
        <end position="76"/>
    </location>
</feature>
<reference key="1">
    <citation type="journal article" date="1997" name="Nature">
        <title>The complete genome sequence of the gastric pathogen Helicobacter pylori.</title>
        <authorList>
            <person name="Tomb J.-F."/>
            <person name="White O."/>
            <person name="Kerlavage A.R."/>
            <person name="Clayton R.A."/>
            <person name="Sutton G.G."/>
            <person name="Fleischmann R.D."/>
            <person name="Ketchum K.A."/>
            <person name="Klenk H.-P."/>
            <person name="Gill S.R."/>
            <person name="Dougherty B.A."/>
            <person name="Nelson K.E."/>
            <person name="Quackenbush J."/>
            <person name="Zhou L."/>
            <person name="Kirkness E.F."/>
            <person name="Peterson S.N."/>
            <person name="Loftus B.J."/>
            <person name="Richardson D.L."/>
            <person name="Dodson R.J."/>
            <person name="Khalak H.G."/>
            <person name="Glodek A."/>
            <person name="McKenney K."/>
            <person name="FitzGerald L.M."/>
            <person name="Lee N."/>
            <person name="Adams M.D."/>
            <person name="Hickey E.K."/>
            <person name="Berg D.E."/>
            <person name="Gocayne J.D."/>
            <person name="Utterback T.R."/>
            <person name="Peterson J.D."/>
            <person name="Kelley J.M."/>
            <person name="Cotton M.D."/>
            <person name="Weidman J.F."/>
            <person name="Fujii C."/>
            <person name="Bowman C."/>
            <person name="Watthey L."/>
            <person name="Wallin E."/>
            <person name="Hayes W.S."/>
            <person name="Borodovsky M."/>
            <person name="Karp P.D."/>
            <person name="Smith H.O."/>
            <person name="Fraser C.M."/>
            <person name="Venter J.C."/>
        </authorList>
    </citation>
    <scope>NUCLEOTIDE SEQUENCE [LARGE SCALE GENOMIC DNA]</scope>
    <source>
        <strain>ATCC 700392 / 26695</strain>
    </source>
</reference>
<sequence length="76" mass="8971">MTVIRLTRIGRKKKPFYRVVVTDSRKRRDGGWIESIGYYNPLSEPKDIKIDKERLNYWKGVGAKMSERVEKLSQKA</sequence>
<evidence type="ECO:0000255" key="1">
    <source>
        <dbReference type="HAMAP-Rule" id="MF_00385"/>
    </source>
</evidence>
<evidence type="ECO:0000305" key="2"/>
<comment type="similarity">
    <text evidence="1">Belongs to the bacterial ribosomal protein bS16 family.</text>
</comment>
<organism>
    <name type="scientific">Helicobacter pylori (strain ATCC 700392 / 26695)</name>
    <name type="common">Campylobacter pylori</name>
    <dbReference type="NCBI Taxonomy" id="85962"/>
    <lineage>
        <taxon>Bacteria</taxon>
        <taxon>Pseudomonadati</taxon>
        <taxon>Campylobacterota</taxon>
        <taxon>Epsilonproteobacteria</taxon>
        <taxon>Campylobacterales</taxon>
        <taxon>Helicobacteraceae</taxon>
        <taxon>Helicobacter</taxon>
    </lineage>
</organism>
<proteinExistence type="inferred from homology"/>
<accession>P56023</accession>
<keyword id="KW-1185">Reference proteome</keyword>
<keyword id="KW-0687">Ribonucleoprotein</keyword>
<keyword id="KW-0689">Ribosomal protein</keyword>